<sequence>MVKLAKAGKNQGDPKKMAPPPKEVEEDSEDEEMSEDEEDDSSGEEVVIPQKKGKKAAATSAKKVVVSPTKKVAVATPAKKAAVTPGKKAAATPAKKTVTPAKAVATPGKKGATPGKALVATPGKKGAAIPAKGAKNGKNAKKEDSDEEEEDDSEEDDEDDEDEDEDEDEIEPAVMKAAAAAPASEDEDDEDDEDDEDEDDDDEEDDSEEEAMETTPAKGKKAAKVVPVKAKNVAEDEDEEEDDEDEDDDDDEDDEDEDDDDEDEEEEEEEEEPVKEAPGKRKKEMAKQKAAPEAKKQKVEGTEPTTAFNLFVGNLNFNKSAPELKTGISDVFAKNDLAVVDVRIGMTRKFGYVDFESAEDLEKALELTGLKVFGNEIKLEKPKGKDSKKERDARTLLAKNLPYKVTQDELKEVFEDAAEIRLVSKDGKSKGIAYIEFKTEADAEKTFEEKQGTEIDGRSISLYYTGEKGQNQDYRGGKNSTWSGESKTLVLSNLSYSATEETLQEVFEKATFIKVPQNQNGKSKGYAFIEFASFEDAKEALNSCNKREIEGRAIRLELQGPRGSPNARSQPSKTLFVKGLSEDTTEETLKESFDGSVRARIVTDRETGSSKGFGFVDFNSEEDAKAAKEAMEDGEIDGNKVTLDWAKPKGEGGFGGRGGGRGGFGGRGGGRGGRGGFGGRGRGGFGGRGGFRGGRGGGGDHKPQGKKTKFE</sequence>
<organism>
    <name type="scientific">Macaca fascicularis</name>
    <name type="common">Crab-eating macaque</name>
    <name type="synonym">Cynomolgus monkey</name>
    <dbReference type="NCBI Taxonomy" id="9541"/>
    <lineage>
        <taxon>Eukaryota</taxon>
        <taxon>Metazoa</taxon>
        <taxon>Chordata</taxon>
        <taxon>Craniata</taxon>
        <taxon>Vertebrata</taxon>
        <taxon>Euteleostomi</taxon>
        <taxon>Mammalia</taxon>
        <taxon>Eutheria</taxon>
        <taxon>Euarchontoglires</taxon>
        <taxon>Primates</taxon>
        <taxon>Haplorrhini</taxon>
        <taxon>Catarrhini</taxon>
        <taxon>Cercopithecidae</taxon>
        <taxon>Cercopithecinae</taxon>
        <taxon>Macaca</taxon>
    </lineage>
</organism>
<keyword id="KW-0007">Acetylation</keyword>
<keyword id="KW-0963">Cytoplasm</keyword>
<keyword id="KW-0238">DNA-binding</keyword>
<keyword id="KW-1017">Isopeptide bond</keyword>
<keyword id="KW-0488">Methylation</keyword>
<keyword id="KW-0539">Nucleus</keyword>
<keyword id="KW-0597">Phosphoprotein</keyword>
<keyword id="KW-1185">Reference proteome</keyword>
<keyword id="KW-0677">Repeat</keyword>
<keyword id="KW-0694">RNA-binding</keyword>
<keyword id="KW-0832">Ubl conjugation</keyword>
<proteinExistence type="evidence at transcript level"/>
<gene>
    <name type="primary">NCL</name>
    <name type="ORF">QtrA-10252</name>
    <name type="ORF">QtsA-10605</name>
</gene>
<evidence type="ECO:0000250" key="1"/>
<evidence type="ECO:0000250" key="2">
    <source>
        <dbReference type="UniProtKB" id="P08199"/>
    </source>
</evidence>
<evidence type="ECO:0000250" key="3">
    <source>
        <dbReference type="UniProtKB" id="P09405"/>
    </source>
</evidence>
<evidence type="ECO:0000250" key="4">
    <source>
        <dbReference type="UniProtKB" id="P19338"/>
    </source>
</evidence>
<evidence type="ECO:0000255" key="5">
    <source>
        <dbReference type="PROSITE-ProRule" id="PRU00176"/>
    </source>
</evidence>
<evidence type="ECO:0000256" key="6">
    <source>
        <dbReference type="SAM" id="MobiDB-lite"/>
    </source>
</evidence>
<reference key="1">
    <citation type="submission" date="2005-06" db="EMBL/GenBank/DDBJ databases">
        <title>DNA sequences of macaque genes expressed in brain or testis and its evolutionary implications.</title>
        <authorList>
            <consortium name="International consortium for macaque cDNA sequencing and analysis"/>
        </authorList>
    </citation>
    <scope>NUCLEOTIDE SEQUENCE [LARGE SCALE MRNA]</scope>
    <source>
        <tissue>Temporal cortex</tissue>
        <tissue>Testis</tissue>
    </source>
</reference>
<accession>Q4R4J7</accession>
<protein>
    <recommendedName>
        <fullName>Nucleolin</fullName>
    </recommendedName>
</protein>
<name>NUCL_MACFA</name>
<comment type="function">
    <text evidence="1">Nucleolin is the major nucleolar protein of growing eukaryotic cells. It is found associated with intranucleolar chromatin and pre-ribosomal particles. It induces chromatin decondensation by binding to histone H1. It is thought to play a role in pre-rRNA transcription and ribosome assembly. May play a role in the process of transcriptional elongation. Binds RNA oligonucleotides with 5'-UUAGGG-3' repeats more tightly than the telomeric single-stranded DNA 5'-TTAGGG-3' repeats (By similarity).</text>
</comment>
<comment type="subunit">
    <text evidence="3 4">Identified in a IGF2BP1-dependent mRNP granule complex containing untranslated mRNAs. Component of the SWAP complex that consists of NPM1, NCL/nucleolin, PARP1 and SWAP70. Component of a complex which is at least composed of HTATSF1/Tat-SF1, the P-TEFb complex components CDK9 and CCNT1, RNA polymerase II, SUPT5H, and NCL/nucleolin. Interacts with AICDA. Interacts with APTX. Interacts with C1QBP. Interacts with ERBB4. Interacts (via C-terminus) with FMR1 isoform 6 (via N-terminus). Interacts with GZF1; this interaction is important for nucleolar localization of GZF1. Interacts with NSUN2. Interacts with NVL. Interacts (via N-terminus domain) with SETX. Interacts (via RRM1 and C-terminal RRM4/Arg/Gly-rich domains) with TERT; the interaction is important for nucleolar localization of TERT. Interacts with WDR46. Interacts with ZFP36. Interacts with LRRC34. Interacts with RRP1B. Interacts with HNRNPU; this interaction occurs during mitosis. Interacts with RIOK1; RIOK1 recruits NCL to PRMT5 for symmetrically methylation (By similarity). Interacts with ZBTB7B (By similarity). Interacts with MDK; this interaction promotes NCL clustering and lateral movements of this complex into lipid rafts leading to MDK internalization (By similarity). Interacts with HDGF (By similarity). Interacts with ALKBH2. Interacts with IGFBP5; this interaction is necessary for IGFBP5 localization to the nucleus (By similarity).</text>
</comment>
<comment type="subcellular location">
    <subcellularLocation>
        <location evidence="4">Nucleus</location>
        <location evidence="4">Nucleolus</location>
    </subcellularLocation>
    <subcellularLocation>
        <location evidence="1">Cytoplasm</location>
    </subcellularLocation>
    <text evidence="1">Localized in cytoplasmic mRNP granules containing untranslated mRNAs.</text>
</comment>
<comment type="PTM">
    <text evidence="1">Some glutamate residues are glycylated by TTLL8. This modification occurs exclusively on glutamate residues and results in a glycine chain on the gamma-carboxyl group (By similarity).</text>
</comment>
<comment type="PTM">
    <text evidence="4">Symmetrically methylated by PRMT5 (By similarity).</text>
</comment>
<dbReference type="EMBL" id="AB169897">
    <property type="protein sequence ID" value="BAE01978.1"/>
    <property type="molecule type" value="mRNA"/>
</dbReference>
<dbReference type="EMBL" id="AB168220">
    <property type="protein sequence ID" value="BAE00345.1"/>
    <property type="molecule type" value="mRNA"/>
</dbReference>
<dbReference type="RefSeq" id="NP_001270477.1">
    <property type="nucleotide sequence ID" value="NM_001283548.1"/>
</dbReference>
<dbReference type="RefSeq" id="XP_045223813.1">
    <property type="nucleotide sequence ID" value="XM_045367878.2"/>
</dbReference>
<dbReference type="SMR" id="Q4R4J7"/>
<dbReference type="STRING" id="9541.ENSMFAP00000031078"/>
<dbReference type="Ensembl" id="ENSMFAT00000005288.2">
    <property type="protein sequence ID" value="ENSMFAP00000031075.1"/>
    <property type="gene ID" value="ENSMFAG00000040385.2"/>
</dbReference>
<dbReference type="GeneID" id="101865794"/>
<dbReference type="VEuPathDB" id="HostDB:ENSMFAG00000040385"/>
<dbReference type="eggNOG" id="KOG0123">
    <property type="taxonomic scope" value="Eukaryota"/>
</dbReference>
<dbReference type="GeneTree" id="ENSGT00940000157437"/>
<dbReference type="OMA" id="EIRIVMN"/>
<dbReference type="Proteomes" id="UP000233100">
    <property type="component" value="Chromosome 12"/>
</dbReference>
<dbReference type="Bgee" id="ENSMFAG00000040385">
    <property type="expression patterns" value="Expressed in lymph node and 13 other cell types or tissues"/>
</dbReference>
<dbReference type="GO" id="GO:0005737">
    <property type="term" value="C:cytoplasm"/>
    <property type="evidence" value="ECO:0007669"/>
    <property type="project" value="UniProtKB-SubCell"/>
</dbReference>
<dbReference type="GO" id="GO:0005730">
    <property type="term" value="C:nucleolus"/>
    <property type="evidence" value="ECO:0007669"/>
    <property type="project" value="UniProtKB-SubCell"/>
</dbReference>
<dbReference type="GO" id="GO:1990904">
    <property type="term" value="C:ribonucleoprotein complex"/>
    <property type="evidence" value="ECO:0000250"/>
    <property type="project" value="UniProtKB"/>
</dbReference>
<dbReference type="GO" id="GO:0003723">
    <property type="term" value="F:RNA binding"/>
    <property type="evidence" value="ECO:0000250"/>
    <property type="project" value="UniProtKB"/>
</dbReference>
<dbReference type="GO" id="GO:0042162">
    <property type="term" value="F:telomeric DNA binding"/>
    <property type="evidence" value="ECO:0000250"/>
    <property type="project" value="UniProtKB"/>
</dbReference>
<dbReference type="CDD" id="cd12403">
    <property type="entry name" value="RRM1_NCL"/>
    <property type="match status" value="1"/>
</dbReference>
<dbReference type="CDD" id="cd12404">
    <property type="entry name" value="RRM2_NCL"/>
    <property type="match status" value="1"/>
</dbReference>
<dbReference type="CDD" id="cd12405">
    <property type="entry name" value="RRM3_NCL"/>
    <property type="match status" value="1"/>
</dbReference>
<dbReference type="CDD" id="cd12406">
    <property type="entry name" value="RRM4_NCL"/>
    <property type="match status" value="1"/>
</dbReference>
<dbReference type="FunFam" id="3.30.70.330:FF:000278">
    <property type="entry name" value="Nucleolin"/>
    <property type="match status" value="1"/>
</dbReference>
<dbReference type="FunFam" id="3.30.70.330:FF:001072">
    <property type="entry name" value="Nucleolin"/>
    <property type="match status" value="1"/>
</dbReference>
<dbReference type="FunFam" id="3.30.70.330:FF:000264">
    <property type="entry name" value="nucleolin"/>
    <property type="match status" value="1"/>
</dbReference>
<dbReference type="FunFam" id="3.30.70.330:FF:000265">
    <property type="entry name" value="nucleolin isoform X1"/>
    <property type="match status" value="1"/>
</dbReference>
<dbReference type="Gene3D" id="3.30.70.330">
    <property type="match status" value="4"/>
</dbReference>
<dbReference type="InterPro" id="IPR034230">
    <property type="entry name" value="Nucleolin_RRM1"/>
</dbReference>
<dbReference type="InterPro" id="IPR034233">
    <property type="entry name" value="Nucleolin_RRM2"/>
</dbReference>
<dbReference type="InterPro" id="IPR034234">
    <property type="entry name" value="Nucleolin_RRM3"/>
</dbReference>
<dbReference type="InterPro" id="IPR034235">
    <property type="entry name" value="Nucleolin_RRM4"/>
</dbReference>
<dbReference type="InterPro" id="IPR012677">
    <property type="entry name" value="Nucleotide-bd_a/b_plait_sf"/>
</dbReference>
<dbReference type="InterPro" id="IPR035979">
    <property type="entry name" value="RBD_domain_sf"/>
</dbReference>
<dbReference type="InterPro" id="IPR000504">
    <property type="entry name" value="RRM_dom"/>
</dbReference>
<dbReference type="InterPro" id="IPR003954">
    <property type="entry name" value="RRM_dom_euk"/>
</dbReference>
<dbReference type="PANTHER" id="PTHR23236">
    <property type="entry name" value="EUKARYOTIC TRANSLATION INITIATION FACTOR 4B/4H"/>
    <property type="match status" value="1"/>
</dbReference>
<dbReference type="PANTHER" id="PTHR23236:SF119">
    <property type="entry name" value="NUCLEAR RNA-BINDING PROTEIN SART-3"/>
    <property type="match status" value="1"/>
</dbReference>
<dbReference type="Pfam" id="PF00076">
    <property type="entry name" value="RRM_1"/>
    <property type="match status" value="4"/>
</dbReference>
<dbReference type="SMART" id="SM00360">
    <property type="entry name" value="RRM"/>
    <property type="match status" value="4"/>
</dbReference>
<dbReference type="SMART" id="SM00361">
    <property type="entry name" value="RRM_1"/>
    <property type="match status" value="2"/>
</dbReference>
<dbReference type="SUPFAM" id="SSF54928">
    <property type="entry name" value="RNA-binding domain, RBD"/>
    <property type="match status" value="3"/>
</dbReference>
<dbReference type="PROSITE" id="PS50102">
    <property type="entry name" value="RRM"/>
    <property type="match status" value="4"/>
</dbReference>
<feature type="chain" id="PRO_0000223181" description="Nucleolin">
    <location>
        <begin position="1"/>
        <end position="711"/>
    </location>
</feature>
<feature type="repeat" description="1">
    <location>
        <begin position="58"/>
        <end position="65"/>
    </location>
</feature>
<feature type="repeat" description="2">
    <location>
        <begin position="75"/>
        <end position="82"/>
    </location>
</feature>
<feature type="repeat" description="3">
    <location>
        <begin position="83"/>
        <end position="90"/>
    </location>
</feature>
<feature type="repeat" description="4">
    <location>
        <begin position="91"/>
        <end position="98"/>
    </location>
</feature>
<feature type="repeat" description="5; truncated">
    <location>
        <begin position="99"/>
        <end position="104"/>
    </location>
</feature>
<feature type="repeat" description="6">
    <location>
        <begin position="105"/>
        <end position="112"/>
    </location>
</feature>
<feature type="repeat" description="7">
    <location>
        <begin position="120"/>
        <end position="127"/>
    </location>
</feature>
<feature type="repeat" description="8">
    <location>
        <begin position="128"/>
        <end position="135"/>
    </location>
</feature>
<feature type="domain" description="RRM 1" evidence="5">
    <location>
        <begin position="308"/>
        <end position="384"/>
    </location>
</feature>
<feature type="domain" description="RRM 2" evidence="5">
    <location>
        <begin position="394"/>
        <end position="467"/>
    </location>
</feature>
<feature type="domain" description="RRM 3" evidence="5">
    <location>
        <begin position="487"/>
        <end position="561"/>
    </location>
</feature>
<feature type="domain" description="RRM 4" evidence="5">
    <location>
        <begin position="573"/>
        <end position="648"/>
    </location>
</feature>
<feature type="region of interest" description="Disordered" evidence="6">
    <location>
        <begin position="1"/>
        <end position="304"/>
    </location>
</feature>
<feature type="region of interest" description="8 X 8 AA tandem repeats of X-T-P-X-K-K-X-X">
    <location>
        <begin position="58"/>
        <end position="135"/>
    </location>
</feature>
<feature type="region of interest" description="Disordered" evidence="6">
    <location>
        <begin position="641"/>
        <end position="711"/>
    </location>
</feature>
<feature type="compositionally biased region" description="Acidic residues" evidence="6">
    <location>
        <begin position="24"/>
        <end position="43"/>
    </location>
</feature>
<feature type="compositionally biased region" description="Low complexity" evidence="6">
    <location>
        <begin position="56"/>
        <end position="107"/>
    </location>
</feature>
<feature type="compositionally biased region" description="Low complexity" evidence="6">
    <location>
        <begin position="122"/>
        <end position="137"/>
    </location>
</feature>
<feature type="compositionally biased region" description="Acidic residues" evidence="6">
    <location>
        <begin position="145"/>
        <end position="171"/>
    </location>
</feature>
<feature type="compositionally biased region" description="Acidic residues" evidence="6">
    <location>
        <begin position="184"/>
        <end position="212"/>
    </location>
</feature>
<feature type="compositionally biased region" description="Acidic residues" evidence="6">
    <location>
        <begin position="235"/>
        <end position="273"/>
    </location>
</feature>
<feature type="compositionally biased region" description="Basic and acidic residues" evidence="6">
    <location>
        <begin position="274"/>
        <end position="301"/>
    </location>
</feature>
<feature type="compositionally biased region" description="Gly residues" evidence="6">
    <location>
        <begin position="651"/>
        <end position="697"/>
    </location>
</feature>
<feature type="compositionally biased region" description="Basic and acidic residues" evidence="6">
    <location>
        <begin position="698"/>
        <end position="711"/>
    </location>
</feature>
<feature type="modified residue" description="N6-acetyllysine" evidence="4">
    <location>
        <position position="9"/>
    </location>
</feature>
<feature type="modified residue" description="N6-acetyllysine" evidence="3">
    <location>
        <position position="15"/>
    </location>
</feature>
<feature type="modified residue" description="N6-acetyllysine" evidence="3">
    <location>
        <position position="16"/>
    </location>
</feature>
<feature type="modified residue" description="Phosphoserine" evidence="4">
    <location>
        <position position="28"/>
    </location>
</feature>
<feature type="modified residue" description="Phosphoserine" evidence="4">
    <location>
        <position position="34"/>
    </location>
</feature>
<feature type="modified residue" description="Phosphoserine" evidence="4">
    <location>
        <position position="41"/>
    </location>
</feature>
<feature type="modified residue" description="Phosphoserine" evidence="4">
    <location>
        <position position="42"/>
    </location>
</feature>
<feature type="modified residue" description="Phosphoserine" evidence="4">
    <location>
        <position position="67"/>
    </location>
</feature>
<feature type="modified residue" description="Phosphothreonine" evidence="4">
    <location>
        <position position="69"/>
    </location>
</feature>
<feature type="modified residue" description="Phosphothreonine" evidence="4">
    <location>
        <position position="76"/>
    </location>
</feature>
<feature type="modified residue" description="Phosphothreonine" evidence="4">
    <location>
        <position position="84"/>
    </location>
</feature>
<feature type="modified residue" description="Phosphothreonine" evidence="4">
    <location>
        <position position="92"/>
    </location>
</feature>
<feature type="modified residue" description="N6-acetyllysine" evidence="3">
    <location>
        <position position="96"/>
    </location>
</feature>
<feature type="modified residue" description="Phosphothreonine" evidence="4">
    <location>
        <position position="99"/>
    </location>
</feature>
<feature type="modified residue" description="N6-acetyllysine" evidence="4">
    <location>
        <position position="102"/>
    </location>
</feature>
<feature type="modified residue" description="Phosphothreonine" evidence="4">
    <location>
        <position position="106"/>
    </location>
</feature>
<feature type="modified residue" description="N6-acetyllysine" evidence="3">
    <location>
        <position position="109"/>
    </location>
</feature>
<feature type="modified residue" description="Phosphothreonine" evidence="4">
    <location>
        <position position="113"/>
    </location>
</feature>
<feature type="modified residue" description="N6-acetyllysine" evidence="4">
    <location>
        <position position="116"/>
    </location>
</feature>
<feature type="modified residue" description="Phosphothreonine" evidence="4">
    <location>
        <position position="121"/>
    </location>
</feature>
<feature type="modified residue" description="N6-acetyllysine" evidence="4">
    <location>
        <position position="124"/>
    </location>
</feature>
<feature type="modified residue" description="Phosphoserine" evidence="4">
    <location>
        <position position="145"/>
    </location>
</feature>
<feature type="modified residue" description="Phosphoserine" evidence="4">
    <location>
        <position position="153"/>
    </location>
</feature>
<feature type="modified residue" description="Phosphoserine" evidence="4">
    <location>
        <position position="184"/>
    </location>
</feature>
<feature type="modified residue" description="Phosphoserine" evidence="4">
    <location>
        <position position="207"/>
    </location>
</feature>
<feature type="modified residue" description="Phosphothreonine" evidence="4">
    <location>
        <position position="215"/>
    </location>
</feature>
<feature type="modified residue" description="Phosphothreonine" evidence="4">
    <location>
        <position position="302"/>
    </location>
</feature>
<feature type="modified residue" description="N6-acetyllysine" evidence="4">
    <location>
        <position position="319"/>
    </location>
</feature>
<feature type="modified residue" description="N6-acetyllysine" evidence="3">
    <location>
        <position position="349"/>
    </location>
</feature>
<feature type="modified residue" description="Phosphoserine" evidence="4">
    <location>
        <position position="357"/>
    </location>
</feature>
<feature type="modified residue" description="Phosphothreonine" evidence="4">
    <location>
        <position position="368"/>
    </location>
</feature>
<feature type="modified residue" description="N6-acetyllysine; alternate" evidence="4">
    <location>
        <position position="378"/>
    </location>
</feature>
<feature type="modified residue" description="N6-acetyllysine" evidence="4">
    <location>
        <position position="399"/>
    </location>
</feature>
<feature type="modified residue" description="N6-acetyllysine" evidence="4">
    <location>
        <position position="404"/>
    </location>
</feature>
<feature type="modified residue" description="Phosphothreonine" evidence="4">
    <location>
        <position position="406"/>
    </location>
</feature>
<feature type="modified residue" description="N6-acetyllysine" evidence="3">
    <location>
        <position position="428"/>
    </location>
</feature>
<feature type="modified residue" description="N6-acetyllysine" evidence="3">
    <location>
        <position position="445"/>
    </location>
</feature>
<feature type="modified residue" description="Phosphoserine" evidence="4">
    <location>
        <position position="459"/>
    </location>
</feature>
<feature type="modified residue" description="Phosphoserine" evidence="4">
    <location>
        <position position="461"/>
    </location>
</feature>
<feature type="modified residue" description="N6-acetyllysine" evidence="3">
    <location>
        <position position="468"/>
    </location>
</feature>
<feature type="modified residue" description="N6-acetyllysine" evidence="3">
    <location>
        <position position="478"/>
    </location>
</feature>
<feature type="modified residue" description="N6-acetyllysine; alternate" evidence="4">
    <location>
        <position position="514"/>
    </location>
</feature>
<feature type="modified residue" description="N6-acetyllysine" evidence="3">
    <location>
        <position position="522"/>
    </location>
</feature>
<feature type="modified residue" description="Phosphoserine" evidence="4">
    <location>
        <position position="564"/>
    </location>
</feature>
<feature type="modified residue" description="N6-acetyllysine" evidence="4">
    <location>
        <position position="573"/>
    </location>
</feature>
<feature type="modified residue" description="N6-acetyllysine; alternate" evidence="4">
    <location>
        <position position="578"/>
    </location>
</feature>
<feature type="modified residue" description="Phosphoserine" evidence="4">
    <location>
        <position position="581"/>
    </location>
</feature>
<feature type="modified residue" description="Phosphoserine" evidence="4">
    <location>
        <position position="592"/>
    </location>
</feature>
<feature type="modified residue" description="Phosphoserine" evidence="4">
    <location>
        <position position="620"/>
    </location>
</feature>
<feature type="modified residue" description="N6-acetyllysine" evidence="4">
    <location>
        <position position="647"/>
    </location>
</feature>
<feature type="modified residue" description="Asymmetric dimethylarginine" evidence="2">
    <location>
        <position position="657"/>
    </location>
</feature>
<feature type="modified residue" description="Asymmetric dimethylarginine" evidence="2">
    <location>
        <position position="661"/>
    </location>
</feature>
<feature type="modified residue" description="Asymmetric dimethylarginine" evidence="2">
    <location>
        <position position="667"/>
    </location>
</feature>
<feature type="modified residue" description="Asymmetric dimethylarginine" evidence="2">
    <location>
        <position position="671"/>
    </location>
</feature>
<feature type="modified residue" description="Asymmetric dimethylarginine" evidence="2">
    <location>
        <position position="674"/>
    </location>
</feature>
<feature type="modified residue" description="Asymmetric dimethylarginine" evidence="2">
    <location>
        <position position="680"/>
    </location>
</feature>
<feature type="modified residue" description="Asymmetric dimethylarginine" evidence="2">
    <location>
        <position position="682"/>
    </location>
</feature>
<feature type="modified residue" description="Asymmetric dimethylarginine" evidence="2">
    <location>
        <position position="688"/>
    </location>
</feature>
<feature type="modified residue" description="Asymmetric dimethylarginine" evidence="2">
    <location>
        <position position="692"/>
    </location>
</feature>
<feature type="modified residue" description="Asymmetric dimethylarginine; alternate" evidence="2">
    <location>
        <position position="695"/>
    </location>
</feature>
<feature type="modified residue" description="Omega-N-methylarginine; alternate" evidence="3">
    <location>
        <position position="695"/>
    </location>
</feature>
<feature type="cross-link" description="Glycyl lysine isopeptide (Lys-Gly) (interchain with G-Cter in SUMO1); alternate" evidence="4">
    <location>
        <position position="298"/>
    </location>
</feature>
<feature type="cross-link" description="Glycyl lysine isopeptide (Lys-Gly) (interchain with G-Cter in SUMO2); alternate" evidence="4">
    <location>
        <position position="298"/>
    </location>
</feature>
<feature type="cross-link" description="Glycyl lysine isopeptide (Lys-Gly) (interchain with G-Cter in SUMO1); alternate" evidence="4">
    <location>
        <position position="325"/>
    </location>
</feature>
<feature type="cross-link" description="Glycyl lysine isopeptide (Lys-Gly) (interchain with G-Cter in SUMO2); alternate" evidence="4">
    <location>
        <position position="325"/>
    </location>
</feature>
<feature type="cross-link" description="Glycyl lysine isopeptide (Lys-Gly) (interchain with G-Cter in SUMO2)" evidence="4">
    <location>
        <position position="371"/>
    </location>
</feature>
<feature type="cross-link" description="Glycyl lysine isopeptide (Lys-Gly) (interchain with G-Cter in SUMO2); alternate" evidence="4">
    <location>
        <position position="378"/>
    </location>
</feature>
<feature type="cross-link" description="Glycyl lysine isopeptide (Lys-Gly) (interchain with G-Cter in SUMO2); alternate" evidence="4">
    <location>
        <position position="514"/>
    </location>
</feature>
<feature type="cross-link" description="Glycyl lysine isopeptide (Lys-Gly) (interchain with G-Cter in SUMO2); alternate" evidence="4">
    <location>
        <position position="578"/>
    </location>
</feature>
<feature type="cross-link" description="Glycyl lysine isopeptide (Lys-Gly) (interchain with G-Cter in SUMO1); alternate" evidence="4">
    <location>
        <position position="590"/>
    </location>
</feature>
<feature type="cross-link" description="Glycyl lysine isopeptide (Lys-Gly) (interchain with G-Cter in SUMO2); alternate" evidence="4">
    <location>
        <position position="590"/>
    </location>
</feature>
<feature type="cross-link" description="Glycyl lysine isopeptide (Lys-Gly) (interchain with G-Cter in SUMO2)" evidence="4">
    <location>
        <position position="625"/>
    </location>
</feature>